<feature type="chain" id="PRO_0000188895" description="tRNA modification GTPase MnmE">
    <location>
        <begin position="1"/>
        <end position="448"/>
    </location>
</feature>
<feature type="domain" description="TrmE-type G">
    <location>
        <begin position="216"/>
        <end position="373"/>
    </location>
</feature>
<feature type="binding site" evidence="1">
    <location>
        <position position="24"/>
    </location>
    <ligand>
        <name>(6S)-5-formyl-5,6,7,8-tetrahydrofolate</name>
        <dbReference type="ChEBI" id="CHEBI:57457"/>
    </ligand>
</feature>
<feature type="binding site" evidence="1">
    <location>
        <position position="81"/>
    </location>
    <ligand>
        <name>(6S)-5-formyl-5,6,7,8-tetrahydrofolate</name>
        <dbReference type="ChEBI" id="CHEBI:57457"/>
    </ligand>
</feature>
<feature type="binding site" evidence="1">
    <location>
        <position position="120"/>
    </location>
    <ligand>
        <name>(6S)-5-formyl-5,6,7,8-tetrahydrofolate</name>
        <dbReference type="ChEBI" id="CHEBI:57457"/>
    </ligand>
</feature>
<feature type="binding site" evidence="1">
    <location>
        <begin position="226"/>
        <end position="231"/>
    </location>
    <ligand>
        <name>GTP</name>
        <dbReference type="ChEBI" id="CHEBI:37565"/>
    </ligand>
</feature>
<feature type="binding site" evidence="1">
    <location>
        <position position="226"/>
    </location>
    <ligand>
        <name>K(+)</name>
        <dbReference type="ChEBI" id="CHEBI:29103"/>
    </ligand>
</feature>
<feature type="binding site" evidence="1">
    <location>
        <position position="230"/>
    </location>
    <ligand>
        <name>Mg(2+)</name>
        <dbReference type="ChEBI" id="CHEBI:18420"/>
    </ligand>
</feature>
<feature type="binding site" evidence="1">
    <location>
        <begin position="245"/>
        <end position="251"/>
    </location>
    <ligand>
        <name>GTP</name>
        <dbReference type="ChEBI" id="CHEBI:37565"/>
    </ligand>
</feature>
<feature type="binding site" evidence="1">
    <location>
        <position position="245"/>
    </location>
    <ligand>
        <name>K(+)</name>
        <dbReference type="ChEBI" id="CHEBI:29103"/>
    </ligand>
</feature>
<feature type="binding site" evidence="1">
    <location>
        <position position="247"/>
    </location>
    <ligand>
        <name>K(+)</name>
        <dbReference type="ChEBI" id="CHEBI:29103"/>
    </ligand>
</feature>
<feature type="binding site" evidence="1">
    <location>
        <position position="250"/>
    </location>
    <ligand>
        <name>K(+)</name>
        <dbReference type="ChEBI" id="CHEBI:29103"/>
    </ligand>
</feature>
<feature type="binding site" evidence="1">
    <location>
        <position position="251"/>
    </location>
    <ligand>
        <name>Mg(2+)</name>
        <dbReference type="ChEBI" id="CHEBI:18420"/>
    </ligand>
</feature>
<feature type="binding site" evidence="1">
    <location>
        <begin position="270"/>
        <end position="273"/>
    </location>
    <ligand>
        <name>GTP</name>
        <dbReference type="ChEBI" id="CHEBI:37565"/>
    </ligand>
</feature>
<feature type="binding site" evidence="1">
    <location>
        <position position="448"/>
    </location>
    <ligand>
        <name>(6S)-5-formyl-5,6,7,8-tetrahydrofolate</name>
        <dbReference type="ChEBI" id="CHEBI:57457"/>
    </ligand>
</feature>
<gene>
    <name evidence="1" type="primary">mnmE</name>
    <name evidence="1" type="synonym">thdF</name>
    <name evidence="1" type="synonym">trmE</name>
    <name type="ordered locus">NMB1987</name>
</gene>
<keyword id="KW-0963">Cytoplasm</keyword>
<keyword id="KW-0342">GTP-binding</keyword>
<keyword id="KW-0378">Hydrolase</keyword>
<keyword id="KW-0460">Magnesium</keyword>
<keyword id="KW-0479">Metal-binding</keyword>
<keyword id="KW-0547">Nucleotide-binding</keyword>
<keyword id="KW-0630">Potassium</keyword>
<keyword id="KW-1185">Reference proteome</keyword>
<keyword id="KW-0819">tRNA processing</keyword>
<dbReference type="EC" id="3.6.-.-" evidence="1"/>
<dbReference type="EMBL" id="AE002098">
    <property type="protein sequence ID" value="AAF42314.1"/>
    <property type="molecule type" value="Genomic_DNA"/>
</dbReference>
<dbReference type="PIR" id="F81019">
    <property type="entry name" value="F81019"/>
</dbReference>
<dbReference type="RefSeq" id="NP_274979.1">
    <property type="nucleotide sequence ID" value="NC_003112.2"/>
</dbReference>
<dbReference type="RefSeq" id="WP_002225859.1">
    <property type="nucleotide sequence ID" value="NC_003112.2"/>
</dbReference>
<dbReference type="SMR" id="Q9JXL4"/>
<dbReference type="FunCoup" id="Q9JXL4">
    <property type="interactions" value="529"/>
</dbReference>
<dbReference type="STRING" id="122586.NMB1987"/>
<dbReference type="PaxDb" id="122586-NMB1987"/>
<dbReference type="KEGG" id="nme:NMB1987"/>
<dbReference type="PATRIC" id="fig|122586.8.peg.2538"/>
<dbReference type="HOGENOM" id="CLU_019624_4_1_4"/>
<dbReference type="InParanoid" id="Q9JXL4"/>
<dbReference type="OrthoDB" id="9805918at2"/>
<dbReference type="Proteomes" id="UP000000425">
    <property type="component" value="Chromosome"/>
</dbReference>
<dbReference type="GO" id="GO:0005737">
    <property type="term" value="C:cytoplasm"/>
    <property type="evidence" value="ECO:0000318"/>
    <property type="project" value="GO_Central"/>
</dbReference>
<dbReference type="GO" id="GO:0005829">
    <property type="term" value="C:cytosol"/>
    <property type="evidence" value="ECO:0000318"/>
    <property type="project" value="GO_Central"/>
</dbReference>
<dbReference type="GO" id="GO:0005525">
    <property type="term" value="F:GTP binding"/>
    <property type="evidence" value="ECO:0007669"/>
    <property type="project" value="UniProtKB-UniRule"/>
</dbReference>
<dbReference type="GO" id="GO:0003924">
    <property type="term" value="F:GTPase activity"/>
    <property type="evidence" value="ECO:0007669"/>
    <property type="project" value="UniProtKB-UniRule"/>
</dbReference>
<dbReference type="GO" id="GO:0046872">
    <property type="term" value="F:metal ion binding"/>
    <property type="evidence" value="ECO:0007669"/>
    <property type="project" value="UniProtKB-KW"/>
</dbReference>
<dbReference type="GO" id="GO:0030488">
    <property type="term" value="P:tRNA methylation"/>
    <property type="evidence" value="ECO:0000318"/>
    <property type="project" value="GO_Central"/>
</dbReference>
<dbReference type="GO" id="GO:0002098">
    <property type="term" value="P:tRNA wobble uridine modification"/>
    <property type="evidence" value="ECO:0000318"/>
    <property type="project" value="GO_Central"/>
</dbReference>
<dbReference type="CDD" id="cd04164">
    <property type="entry name" value="trmE"/>
    <property type="match status" value="1"/>
</dbReference>
<dbReference type="CDD" id="cd14858">
    <property type="entry name" value="TrmE_N"/>
    <property type="match status" value="1"/>
</dbReference>
<dbReference type="FunFam" id="3.30.1360.120:FF:000001">
    <property type="entry name" value="tRNA modification GTPase MnmE"/>
    <property type="match status" value="1"/>
</dbReference>
<dbReference type="FunFam" id="3.40.50.300:FF:001376">
    <property type="entry name" value="tRNA modification GTPase MnmE"/>
    <property type="match status" value="1"/>
</dbReference>
<dbReference type="Gene3D" id="3.40.50.300">
    <property type="entry name" value="P-loop containing nucleotide triphosphate hydrolases"/>
    <property type="match status" value="1"/>
</dbReference>
<dbReference type="Gene3D" id="3.30.1360.120">
    <property type="entry name" value="Probable tRNA modification gtpase trme, domain 1"/>
    <property type="match status" value="1"/>
</dbReference>
<dbReference type="Gene3D" id="1.20.120.430">
    <property type="entry name" value="tRNA modification GTPase MnmE domain 2"/>
    <property type="match status" value="1"/>
</dbReference>
<dbReference type="HAMAP" id="MF_00379">
    <property type="entry name" value="GTPase_MnmE"/>
    <property type="match status" value="1"/>
</dbReference>
<dbReference type="InterPro" id="IPR031168">
    <property type="entry name" value="G_TrmE"/>
</dbReference>
<dbReference type="InterPro" id="IPR006073">
    <property type="entry name" value="GTP-bd"/>
</dbReference>
<dbReference type="InterPro" id="IPR018948">
    <property type="entry name" value="GTP-bd_TrmE_N"/>
</dbReference>
<dbReference type="InterPro" id="IPR004520">
    <property type="entry name" value="GTPase_MnmE"/>
</dbReference>
<dbReference type="InterPro" id="IPR027368">
    <property type="entry name" value="MnmE_dom2"/>
</dbReference>
<dbReference type="InterPro" id="IPR025867">
    <property type="entry name" value="MnmE_helical"/>
</dbReference>
<dbReference type="InterPro" id="IPR027417">
    <property type="entry name" value="P-loop_NTPase"/>
</dbReference>
<dbReference type="InterPro" id="IPR005225">
    <property type="entry name" value="Small_GTP-bd"/>
</dbReference>
<dbReference type="InterPro" id="IPR027266">
    <property type="entry name" value="TrmE/GcvT_dom1"/>
</dbReference>
<dbReference type="NCBIfam" id="TIGR00450">
    <property type="entry name" value="mnmE_trmE_thdF"/>
    <property type="match status" value="1"/>
</dbReference>
<dbReference type="NCBIfam" id="NF003661">
    <property type="entry name" value="PRK05291.1-3"/>
    <property type="match status" value="1"/>
</dbReference>
<dbReference type="NCBIfam" id="TIGR00231">
    <property type="entry name" value="small_GTP"/>
    <property type="match status" value="1"/>
</dbReference>
<dbReference type="PANTHER" id="PTHR42714">
    <property type="entry name" value="TRNA MODIFICATION GTPASE GTPBP3"/>
    <property type="match status" value="1"/>
</dbReference>
<dbReference type="PANTHER" id="PTHR42714:SF2">
    <property type="entry name" value="TRNA MODIFICATION GTPASE GTPBP3, MITOCHONDRIAL"/>
    <property type="match status" value="1"/>
</dbReference>
<dbReference type="Pfam" id="PF01926">
    <property type="entry name" value="MMR_HSR1"/>
    <property type="match status" value="1"/>
</dbReference>
<dbReference type="Pfam" id="PF12631">
    <property type="entry name" value="MnmE_helical"/>
    <property type="match status" value="1"/>
</dbReference>
<dbReference type="Pfam" id="PF10396">
    <property type="entry name" value="TrmE_N"/>
    <property type="match status" value="1"/>
</dbReference>
<dbReference type="SUPFAM" id="SSF52540">
    <property type="entry name" value="P-loop containing nucleoside triphosphate hydrolases"/>
    <property type="match status" value="1"/>
</dbReference>
<dbReference type="SUPFAM" id="SSF116878">
    <property type="entry name" value="TrmE connector domain"/>
    <property type="match status" value="1"/>
</dbReference>
<dbReference type="PROSITE" id="PS51709">
    <property type="entry name" value="G_TRME"/>
    <property type="match status" value="1"/>
</dbReference>
<name>MNME_NEIMB</name>
<proteinExistence type="inferred from homology"/>
<protein>
    <recommendedName>
        <fullName evidence="1">tRNA modification GTPase MnmE</fullName>
        <ecNumber evidence="1">3.6.-.-</ecNumber>
    </recommendedName>
</protein>
<sequence length="448" mass="47562">MSDNVPTIAAVATAPGRGGVGVIRISGKNLLPMAQALCGKTPKPRTATYADFTDTDGQAIDSGLLLFFAAPASFTGEDVIELQGHGGPVVMDMLLNRCLELGARLAEPGEFTKRAFLNDKLDLAQAEGVADLIDASSRSAARLALRSLKGDFSRRIHGLVEDLITLRMLVEATLDFPEEDIDFLEAADARGKLDGLRRAVDDVLANAQQGAILREGLNVVLVGAPNVGKSSLLNALAGDEVAIVTDIAGTTRDAVRERILIDGVPVHIVDTAGLRETDDVVERIGIERSRKAVSEADVALVLVDPREGLNEKTRAILDALPPELKRIEIHSKSDLHAHAAGGFGTGAETVIALSAKTGDGLDALKRTLLREAGWQGESEGLFLARTRHVNALKAAQEELSLAALCGNHQIELFAEHLRLAQVACGEITGEFTADDLLGVIFSRFCIGK</sequence>
<organism>
    <name type="scientific">Neisseria meningitidis serogroup B (strain ATCC BAA-335 / MC58)</name>
    <dbReference type="NCBI Taxonomy" id="122586"/>
    <lineage>
        <taxon>Bacteria</taxon>
        <taxon>Pseudomonadati</taxon>
        <taxon>Pseudomonadota</taxon>
        <taxon>Betaproteobacteria</taxon>
        <taxon>Neisseriales</taxon>
        <taxon>Neisseriaceae</taxon>
        <taxon>Neisseria</taxon>
    </lineage>
</organism>
<accession>Q9JXL4</accession>
<reference key="1">
    <citation type="journal article" date="2000" name="Science">
        <title>Complete genome sequence of Neisseria meningitidis serogroup B strain MC58.</title>
        <authorList>
            <person name="Tettelin H."/>
            <person name="Saunders N.J."/>
            <person name="Heidelberg J.F."/>
            <person name="Jeffries A.C."/>
            <person name="Nelson K.E."/>
            <person name="Eisen J.A."/>
            <person name="Ketchum K.A."/>
            <person name="Hood D.W."/>
            <person name="Peden J.F."/>
            <person name="Dodson R.J."/>
            <person name="Nelson W.C."/>
            <person name="Gwinn M.L."/>
            <person name="DeBoy R.T."/>
            <person name="Peterson J.D."/>
            <person name="Hickey E.K."/>
            <person name="Haft D.H."/>
            <person name="Salzberg S.L."/>
            <person name="White O."/>
            <person name="Fleischmann R.D."/>
            <person name="Dougherty B.A."/>
            <person name="Mason T.M."/>
            <person name="Ciecko A."/>
            <person name="Parksey D.S."/>
            <person name="Blair E."/>
            <person name="Cittone H."/>
            <person name="Clark E.B."/>
            <person name="Cotton M.D."/>
            <person name="Utterback T.R."/>
            <person name="Khouri H.M."/>
            <person name="Qin H."/>
            <person name="Vamathevan J.J."/>
            <person name="Gill J."/>
            <person name="Scarlato V."/>
            <person name="Masignani V."/>
            <person name="Pizza M."/>
            <person name="Grandi G."/>
            <person name="Sun L."/>
            <person name="Smith H.O."/>
            <person name="Fraser C.M."/>
            <person name="Moxon E.R."/>
            <person name="Rappuoli R."/>
            <person name="Venter J.C."/>
        </authorList>
    </citation>
    <scope>NUCLEOTIDE SEQUENCE [LARGE SCALE GENOMIC DNA]</scope>
    <source>
        <strain>ATCC BAA-335 / MC58</strain>
    </source>
</reference>
<evidence type="ECO:0000255" key="1">
    <source>
        <dbReference type="HAMAP-Rule" id="MF_00379"/>
    </source>
</evidence>
<comment type="function">
    <text evidence="1">Exhibits a very high intrinsic GTPase hydrolysis rate. Involved in the addition of a carboxymethylaminomethyl (cmnm) group at the wobble position (U34) of certain tRNAs, forming tRNA-cmnm(5)s(2)U34.</text>
</comment>
<comment type="cofactor">
    <cofactor evidence="1">
        <name>K(+)</name>
        <dbReference type="ChEBI" id="CHEBI:29103"/>
    </cofactor>
    <text evidence="1">Binds 1 potassium ion per subunit.</text>
</comment>
<comment type="subunit">
    <text evidence="1">Homodimer. Heterotetramer of two MnmE and two MnmG subunits.</text>
</comment>
<comment type="subcellular location">
    <subcellularLocation>
        <location evidence="1">Cytoplasm</location>
    </subcellularLocation>
</comment>
<comment type="similarity">
    <text evidence="1">Belongs to the TRAFAC class TrmE-Era-EngA-EngB-Septin-like GTPase superfamily. TrmE GTPase family.</text>
</comment>